<proteinExistence type="inferred from homology"/>
<accession>Q96686</accession>
<evidence type="ECO:0000255" key="1">
    <source>
        <dbReference type="HAMAP-Rule" id="MF_04048"/>
    </source>
</evidence>
<evidence type="ECO:0000256" key="2">
    <source>
        <dbReference type="SAM" id="MobiDB-lite"/>
    </source>
</evidence>
<keyword id="KW-0167">Capsid protein</keyword>
<keyword id="KW-1176">Cytoplasmic inwards viral transport</keyword>
<keyword id="KW-1015">Disulfide bond</keyword>
<keyword id="KW-1035">Host cytoplasm</keyword>
<keyword id="KW-1048">Host nucleus</keyword>
<keyword id="KW-0945">Host-virus interaction</keyword>
<keyword id="KW-0426">Late protein</keyword>
<keyword id="KW-1177">Microtubular inwards viral transport</keyword>
<keyword id="KW-0597">Phosphoprotein</keyword>
<keyword id="KW-0832">Ubl conjugation</keyword>
<keyword id="KW-0118">Viral capsid assembly</keyword>
<keyword id="KW-1162">Viral penetration into host cytoplasm</keyword>
<keyword id="KW-1174">Viral penetration via lysis of host organellar membrane</keyword>
<keyword id="KW-1188">Viral release from host cell</keyword>
<keyword id="KW-0946">Virion</keyword>
<keyword id="KW-1160">Virus entry into host cell</keyword>
<name>CAP6_ADECR</name>
<organismHost>
    <name type="scientific">Canis lupus familiaris</name>
    <name type="common">Dog</name>
    <name type="synonym">Canis familiaris</name>
    <dbReference type="NCBI Taxonomy" id="9615"/>
</organismHost>
<dbReference type="EMBL" id="Y07760">
    <property type="protein sequence ID" value="CAA69065.1"/>
    <property type="molecule type" value="Genomic_DNA"/>
</dbReference>
<dbReference type="RefSeq" id="AP_000058.1">
    <property type="nucleotide sequence ID" value="AC_000003.1"/>
</dbReference>
<dbReference type="KEGG" id="vg:1488930"/>
<dbReference type="Proteomes" id="UP000126130">
    <property type="component" value="Segment"/>
</dbReference>
<dbReference type="GO" id="GO:0043657">
    <property type="term" value="C:host cell"/>
    <property type="evidence" value="ECO:0007669"/>
    <property type="project" value="GOC"/>
</dbReference>
<dbReference type="GO" id="GO:0030430">
    <property type="term" value="C:host cell cytoplasm"/>
    <property type="evidence" value="ECO:0007669"/>
    <property type="project" value="UniProtKB-SubCell"/>
</dbReference>
<dbReference type="GO" id="GO:0042025">
    <property type="term" value="C:host cell nucleus"/>
    <property type="evidence" value="ECO:0007669"/>
    <property type="project" value="UniProtKB-SubCell"/>
</dbReference>
<dbReference type="GO" id="GO:0019028">
    <property type="term" value="C:viral capsid"/>
    <property type="evidence" value="ECO:0007669"/>
    <property type="project" value="UniProtKB-UniRule"/>
</dbReference>
<dbReference type="GO" id="GO:0046729">
    <property type="term" value="C:viral procapsid"/>
    <property type="evidence" value="ECO:0007669"/>
    <property type="project" value="UniProtKB-UniRule"/>
</dbReference>
<dbReference type="GO" id="GO:0039664">
    <property type="term" value="P:lysis of host organelle involved in viral entry into host cell"/>
    <property type="evidence" value="ECO:0007669"/>
    <property type="project" value="UniProtKB-UniRule"/>
</dbReference>
<dbReference type="GO" id="GO:0075521">
    <property type="term" value="P:microtubule-dependent intracellular transport of viral material towards nucleus"/>
    <property type="evidence" value="ECO:0007669"/>
    <property type="project" value="UniProtKB-UniRule"/>
</dbReference>
<dbReference type="GO" id="GO:0019076">
    <property type="term" value="P:viral release from host cell"/>
    <property type="evidence" value="ECO:0007669"/>
    <property type="project" value="UniProtKB-UniRule"/>
</dbReference>
<dbReference type="HAMAP" id="MF_04048">
    <property type="entry name" value="ADV_CAP6"/>
    <property type="match status" value="1"/>
</dbReference>
<dbReference type="InterPro" id="IPR004243">
    <property type="entry name" value="McpVI"/>
</dbReference>
<dbReference type="Pfam" id="PF02993">
    <property type="entry name" value="MCPVI"/>
    <property type="match status" value="1"/>
</dbReference>
<reference key="1">
    <citation type="journal article" date="1997" name="J. Gen. Virol.">
        <title>Complete DNA sequence of canine adenovirus type 1.</title>
        <authorList>
            <person name="Morrison M.D."/>
            <person name="Onions D.E."/>
            <person name="Nicolson L."/>
        </authorList>
    </citation>
    <scope>NUCLEOTIDE SEQUENCE [LARGE SCALE GENOMIC DNA]</scope>
</reference>
<gene>
    <name evidence="1" type="primary">L3</name>
</gene>
<organism>
    <name type="scientific">Canine adenovirus serotype 1 (strain RI261)</name>
    <name type="common">CAdV-1</name>
    <name type="synonym">Canine adenovirus 1 (strain RI261)</name>
    <dbReference type="NCBI Taxonomy" id="69151"/>
    <lineage>
        <taxon>Viruses</taxon>
        <taxon>Varidnaviria</taxon>
        <taxon>Bamfordvirae</taxon>
        <taxon>Preplasmiviricota</taxon>
        <taxon>Tectiliviricetes</taxon>
        <taxon>Rowavirales</taxon>
        <taxon>Adenoviridae</taxon>
        <taxon>Mastadenovirus</taxon>
        <taxon>Canine mastadenovirus A</taxon>
    </lineage>
</organism>
<sequence>MDAVNFSILAPRYGSHPMMSAWSGIGTSDMNGGAFNWGGIWSGIKNFGSNVKNWGSRAWNSQTGKLLRQKLNDTKVREKLVEGISTGVHGALDIANQEIAKQIERRLERQQPLEPEVEEETVETKSEAKAPLVVEMPLKRPRDEDLVITADEPPSYEETIKTMAPLVPMTRPHPSMARPVIADRPTTLELKPSDQPPPYSPQSSNMPVTAPVRSRGWQGTLANIVGVGLSNVKRRRCF</sequence>
<comment type="function">
    <molecule>Pre-protein VI</molecule>
    <text evidence="1">During virus assembly, promotes hexon trimers nuclear import through nuclear pore complexes via an importin alpha/beta-dependent mechanism. By analogy to herpesviruses capsid assembly, might act as a chaperone to promote the formation of the icosahedral capsid.</text>
</comment>
<comment type="function">
    <molecule>Endosome lysis protein</molecule>
    <text evidence="1">Structural component of the virion that provides increased stability to the particle shell through its interaction with the core-capsid bridging protein and the hexon-linking protein VIII. Fibers shedding during virus entry into host cell allows the endosome lysis protein to be exposed as a membrane-lytic peptide. Exhibits pH-independent membrane fragmentation activity and probably mediates viral rapid escape from host endosome via organellar membrane lysis. It is not clear if it then remains partially associated with the capsid and involved in the intracellular microtubule-dependent transport of capsid to the nucleus, or if it is lost during endosomal penetration.</text>
</comment>
<comment type="function">
    <molecule>Protease cofactor</molecule>
    <text evidence="1">Cofactor that activates the viral protease. Binds to viral protease in a 1:1 ratio.</text>
</comment>
<comment type="subunit">
    <molecule>Pre-protein VI</molecule>
    <text evidence="1">Interacts with hexon protein; this interaction allows nuclear import of hexon trimers and possibly pre-capsid assembly. Interacts (via C-terminal NLS) with importin alpha/beta.</text>
</comment>
<comment type="subunit">
    <molecule>Endosome lysis protein</molecule>
    <text evidence="1">Interacts (via PPxY motif) with host NEDD4 ubiquitine ligase; this interaction might play a role in virus intracellular transport during entry. Part of a complex composed of the core-capsid bridging protein, the endosome lysis protein VI and the hexon-linking protein VIII; these interactions bridge the virus core to the capsid. Interacts with peripentonal hexons; this interaction stabilizes the capsid by gluing two peripentonal hexons together and joining them with an adjacent group-of-nine hexon.</text>
</comment>
<comment type="subunit">
    <molecule>Protease cofactor</molecule>
    <text evidence="1">Heterodimer with the viral protease; disulfide-linked. Interacts with the viral protease.</text>
</comment>
<comment type="subcellular location">
    <molecule>Pre-protein VI</molecule>
    <subcellularLocation>
        <location evidence="1">Host nucleus</location>
    </subcellularLocation>
    <subcellularLocation>
        <location evidence="1">Host cytoplasm</location>
    </subcellularLocation>
    <text evidence="1">Shuttles between host cytoplasm and nucleus.</text>
</comment>
<comment type="subcellular location">
    <molecule>Endosome lysis protein</molecule>
    <subcellularLocation>
        <location evidence="1">Virion</location>
    </subcellularLocation>
    <text evidence="1">Associates with the base of each peripentonal hexon on the capsid interior. Present in around 360 copies per virion.</text>
</comment>
<comment type="induction">
    <text evidence="1">Expressed in the late phase of the viral replicative cycle.</text>
</comment>
<comment type="domain">
    <text evidence="1">N-terminal amphipathic alpha-helix domain is essential for the membrane lytic activity.</text>
</comment>
<comment type="domain">
    <text evidence="1">Late-budding domains (L domains) are short sequence motifs essential for viral particle release. They can occur individually or in close proximity within structural proteins. They interacts with sorting cellular proteins of the multivesicular body (MVB) pathway. Most of these proteins are class E vacuolar protein sorting factors belonging to ESCRT-I, ESCRT-II or ESCRT-III complexes. Minor capsid protein 6 contains one L domain: a PPXY motif which binds to the WW domains of HECT (homologous to E6-AP C-terminus) E3 ubiquitin ligases, like NEDD4. In adenoviruses, this motif seems to play a role in microtubule-dependent intracellular trafficking toward the nucleus during virus entry into host cell and in suppression of DAXX-mediated repression of the immediate early E1A promoter.</text>
</comment>
<comment type="PTM">
    <text evidence="1">Ubiquitinated by Nedd4 following partial capsid disassembly; which might play a role in intracellular virus movement during entry.</text>
</comment>
<comment type="PTM">
    <molecule>Protease cofactor</molecule>
    <text evidence="1">Contains the major nuclear import and export signals. Proteolytically removed during virion maturation. The processing of the C-terminus turns the precursor into a mature viral structural protein and abrogates its ability to promote hexon import and act as a potential chaperone protein.</text>
</comment>
<comment type="miscellaneous">
    <text evidence="1">All late proteins expressed from the major late promoter are produced by alternative splicing and alternative polyadenylation of the same gene giving rise to non-overlapping ORFs. A leader sequence is present in the N-terminus of all these mRNAs and is recognized by the viral shutoff protein to provide expression although conventional translation via ribosome scanning from the cap has been shut off in the host cell.</text>
</comment>
<comment type="similarity">
    <text evidence="1">Belongs to the adenoviridae protein VI family.</text>
</comment>
<protein>
    <recommendedName>
        <fullName evidence="1">Pre-protein VI</fullName>
        <shortName evidence="1">pVI</shortName>
    </recommendedName>
    <component>
        <recommendedName>
            <fullName evidence="1">Endosome lysis protein</fullName>
        </recommendedName>
    </component>
    <component>
        <recommendedName>
            <fullName evidence="1">Protease cofactor</fullName>
        </recommendedName>
        <alternativeName>
            <fullName evidence="1">pVI-C</fullName>
        </alternativeName>
    </component>
</protein>
<feature type="chain" id="PRO_0000421431" description="Pre-protein VI" evidence="1">
    <location>
        <begin position="1"/>
        <end position="238"/>
    </location>
</feature>
<feature type="propeptide" id="PRO_0000036563" evidence="1">
    <location>
        <begin position="1"/>
        <end position="33"/>
    </location>
</feature>
<feature type="chain" id="PRO_0000036564" description="Endosome lysis protein" evidence="1">
    <location>
        <begin position="34"/>
        <end position="227"/>
    </location>
</feature>
<feature type="chain" id="PRO_0000036565" description="Protease cofactor" evidence="1">
    <location>
        <begin position="228"/>
        <end position="238"/>
    </location>
</feature>
<feature type="region of interest" description="Amphipathic alpha-helix essential for membrane lytic activity" evidence="1">
    <location>
        <begin position="34"/>
        <end position="54"/>
    </location>
</feature>
<feature type="region of interest" description="Involved in endosomal membrane lysis" evidence="1">
    <location>
        <begin position="36"/>
        <end position="53"/>
    </location>
</feature>
<feature type="region of interest" description="Interaction with hexon protein" evidence="1">
    <location>
        <begin position="48"/>
        <end position="74"/>
    </location>
</feature>
<feature type="region of interest" description="Disordered" evidence="2">
    <location>
        <begin position="187"/>
        <end position="212"/>
    </location>
</feature>
<feature type="region of interest" description="Interaction with hexon protein" evidence="1">
    <location>
        <begin position="221"/>
        <end position="227"/>
    </location>
</feature>
<feature type="region of interest" description="Binds to importin alpha/beta, involved in hexon nuclear import" evidence="1">
    <location>
        <begin position="228"/>
        <end position="238"/>
    </location>
</feature>
<feature type="short sequence motif" description="Nuclear export signal" evidence="1">
    <location>
        <begin position="67"/>
        <end position="76"/>
    </location>
</feature>
<feature type="short sequence motif" description="PPXY motif" evidence="1">
    <location>
        <begin position="153"/>
        <end position="156"/>
    </location>
</feature>
<feature type="short sequence motif" description="Nuclear export signal" evidence="1">
    <location>
        <begin position="219"/>
        <end position="230"/>
    </location>
</feature>
<feature type="short sequence motif" description="Nuclear localization signal" evidence="1">
    <location>
        <begin position="233"/>
        <end position="236"/>
    </location>
</feature>
<feature type="site" description="Cleavage; by viral protease" evidence="1">
    <location>
        <begin position="33"/>
        <end position="34"/>
    </location>
</feature>
<feature type="site" description="Cleavage; by viral protease" evidence="1">
    <location>
        <begin position="227"/>
        <end position="228"/>
    </location>
</feature>
<feature type="disulfide bond" description="Interchain (with Adenovirus protease)" evidence="1">
    <location>
        <position position="237"/>
    </location>
</feature>